<sequence>MTMENKPAGQNGLTYAQAGVDIDAGNLMVEKIKPLVRSTRRPGADGEIGGFGGLFDLKAAGFKDPVLVAANDGVGTKLKIAIDADIHDTVGIDLVAMCVNDLVVQGAEPLFFLDYYATGKLSPDQGVAIVSGIAEGCRQAGCALIGGETAEMPGMYRDGDYDLAGFAVGAAERDRLLPRGDIAEGDIILGLASSGVHSNGFSLVRRIVELSGLGWKSQAPFQPGATLGEALLTPTRIYVKPLLAAIRACDGIKALAHITGGGFPDNIPRVLPKGLAAEIDLPAIAVPPVFSWLAKTGNVEPNEMLRTFNCGIGMIAVVNPAKVDEVIAALAAEGEKVVTLGRMTRREKDGVIYKGQLAL</sequence>
<proteinExistence type="inferred from homology"/>
<gene>
    <name evidence="1" type="primary">purM</name>
    <name type="ordered locus">BSUIS_A0741</name>
</gene>
<keyword id="KW-0067">ATP-binding</keyword>
<keyword id="KW-0963">Cytoplasm</keyword>
<keyword id="KW-0436">Ligase</keyword>
<keyword id="KW-0547">Nucleotide-binding</keyword>
<keyword id="KW-0658">Purine biosynthesis</keyword>
<name>PUR5_BRUSI</name>
<organism>
    <name type="scientific">Brucella suis (strain ATCC 23445 / NCTC 10510)</name>
    <dbReference type="NCBI Taxonomy" id="470137"/>
    <lineage>
        <taxon>Bacteria</taxon>
        <taxon>Pseudomonadati</taxon>
        <taxon>Pseudomonadota</taxon>
        <taxon>Alphaproteobacteria</taxon>
        <taxon>Hyphomicrobiales</taxon>
        <taxon>Brucellaceae</taxon>
        <taxon>Brucella/Ochrobactrum group</taxon>
        <taxon>Brucella</taxon>
    </lineage>
</organism>
<accession>B0CL36</accession>
<dbReference type="EC" id="6.3.3.1" evidence="1"/>
<dbReference type="EMBL" id="CP000911">
    <property type="protein sequence ID" value="ABY37816.1"/>
    <property type="molecule type" value="Genomic_DNA"/>
</dbReference>
<dbReference type="RefSeq" id="WP_002963853.1">
    <property type="nucleotide sequence ID" value="NC_010169.1"/>
</dbReference>
<dbReference type="SMR" id="B0CL36"/>
<dbReference type="GeneID" id="93016888"/>
<dbReference type="KEGG" id="bmt:BSUIS_A0741"/>
<dbReference type="HOGENOM" id="CLU_047116_0_0_5"/>
<dbReference type="UniPathway" id="UPA00074">
    <property type="reaction ID" value="UER00129"/>
</dbReference>
<dbReference type="PRO" id="PR:B0CL36"/>
<dbReference type="Proteomes" id="UP000008545">
    <property type="component" value="Chromosome I"/>
</dbReference>
<dbReference type="GO" id="GO:0005829">
    <property type="term" value="C:cytosol"/>
    <property type="evidence" value="ECO:0007669"/>
    <property type="project" value="TreeGrafter"/>
</dbReference>
<dbReference type="GO" id="GO:0005524">
    <property type="term" value="F:ATP binding"/>
    <property type="evidence" value="ECO:0007669"/>
    <property type="project" value="UniProtKB-KW"/>
</dbReference>
<dbReference type="GO" id="GO:0004637">
    <property type="term" value="F:phosphoribosylamine-glycine ligase activity"/>
    <property type="evidence" value="ECO:0007669"/>
    <property type="project" value="TreeGrafter"/>
</dbReference>
<dbReference type="GO" id="GO:0004641">
    <property type="term" value="F:phosphoribosylformylglycinamidine cyclo-ligase activity"/>
    <property type="evidence" value="ECO:0007669"/>
    <property type="project" value="UniProtKB-UniRule"/>
</dbReference>
<dbReference type="GO" id="GO:0006189">
    <property type="term" value="P:'de novo' IMP biosynthetic process"/>
    <property type="evidence" value="ECO:0007669"/>
    <property type="project" value="UniProtKB-UniRule"/>
</dbReference>
<dbReference type="GO" id="GO:0046084">
    <property type="term" value="P:adenine biosynthetic process"/>
    <property type="evidence" value="ECO:0007669"/>
    <property type="project" value="TreeGrafter"/>
</dbReference>
<dbReference type="CDD" id="cd02196">
    <property type="entry name" value="PurM"/>
    <property type="match status" value="1"/>
</dbReference>
<dbReference type="FunFam" id="3.30.1330.10:FF:000001">
    <property type="entry name" value="Phosphoribosylformylglycinamidine cyclo-ligase"/>
    <property type="match status" value="1"/>
</dbReference>
<dbReference type="FunFam" id="3.90.650.10:FF:000019">
    <property type="entry name" value="Trifunctional purine biosynthetic protein adenosine-3"/>
    <property type="match status" value="1"/>
</dbReference>
<dbReference type="Gene3D" id="3.90.650.10">
    <property type="entry name" value="PurM-like C-terminal domain"/>
    <property type="match status" value="1"/>
</dbReference>
<dbReference type="Gene3D" id="3.30.1330.10">
    <property type="entry name" value="PurM-like, N-terminal domain"/>
    <property type="match status" value="1"/>
</dbReference>
<dbReference type="HAMAP" id="MF_00741">
    <property type="entry name" value="AIRS"/>
    <property type="match status" value="1"/>
</dbReference>
<dbReference type="InterPro" id="IPR010918">
    <property type="entry name" value="PurM-like_C_dom"/>
</dbReference>
<dbReference type="InterPro" id="IPR036676">
    <property type="entry name" value="PurM-like_C_sf"/>
</dbReference>
<dbReference type="InterPro" id="IPR016188">
    <property type="entry name" value="PurM-like_N"/>
</dbReference>
<dbReference type="InterPro" id="IPR036921">
    <property type="entry name" value="PurM-like_N_sf"/>
</dbReference>
<dbReference type="InterPro" id="IPR004733">
    <property type="entry name" value="PurM_cligase"/>
</dbReference>
<dbReference type="NCBIfam" id="TIGR00878">
    <property type="entry name" value="purM"/>
    <property type="match status" value="1"/>
</dbReference>
<dbReference type="PANTHER" id="PTHR10520:SF12">
    <property type="entry name" value="TRIFUNCTIONAL PURINE BIOSYNTHETIC PROTEIN ADENOSINE-3"/>
    <property type="match status" value="1"/>
</dbReference>
<dbReference type="PANTHER" id="PTHR10520">
    <property type="entry name" value="TRIFUNCTIONAL PURINE BIOSYNTHETIC PROTEIN ADENOSINE-3-RELATED"/>
    <property type="match status" value="1"/>
</dbReference>
<dbReference type="Pfam" id="PF00586">
    <property type="entry name" value="AIRS"/>
    <property type="match status" value="1"/>
</dbReference>
<dbReference type="Pfam" id="PF02769">
    <property type="entry name" value="AIRS_C"/>
    <property type="match status" value="1"/>
</dbReference>
<dbReference type="SUPFAM" id="SSF56042">
    <property type="entry name" value="PurM C-terminal domain-like"/>
    <property type="match status" value="1"/>
</dbReference>
<dbReference type="SUPFAM" id="SSF55326">
    <property type="entry name" value="PurM N-terminal domain-like"/>
    <property type="match status" value="1"/>
</dbReference>
<evidence type="ECO:0000255" key="1">
    <source>
        <dbReference type="HAMAP-Rule" id="MF_00741"/>
    </source>
</evidence>
<protein>
    <recommendedName>
        <fullName evidence="1">Phosphoribosylformylglycinamidine cyclo-ligase</fullName>
        <ecNumber evidence="1">6.3.3.1</ecNumber>
    </recommendedName>
    <alternativeName>
        <fullName evidence="1">AIR synthase</fullName>
    </alternativeName>
    <alternativeName>
        <fullName evidence="1">AIRS</fullName>
    </alternativeName>
    <alternativeName>
        <fullName evidence="1">Phosphoribosyl-aminoimidazole synthetase</fullName>
    </alternativeName>
</protein>
<feature type="chain" id="PRO_1000083452" description="Phosphoribosylformylglycinamidine cyclo-ligase">
    <location>
        <begin position="1"/>
        <end position="359"/>
    </location>
</feature>
<reference key="1">
    <citation type="submission" date="2007-12" db="EMBL/GenBank/DDBJ databases">
        <title>Brucella suis ATCC 23445 whole genome shotgun sequencing project.</title>
        <authorList>
            <person name="Setubal J.C."/>
            <person name="Bowns C."/>
            <person name="Boyle S."/>
            <person name="Crasta O.R."/>
            <person name="Czar M.J."/>
            <person name="Dharmanolla C."/>
            <person name="Gillespie J.J."/>
            <person name="Kenyon R.W."/>
            <person name="Lu J."/>
            <person name="Mane S."/>
            <person name="Mohapatra S."/>
            <person name="Nagrani S."/>
            <person name="Purkayastha A."/>
            <person name="Rajasimha H.K."/>
            <person name="Shallom J.M."/>
            <person name="Shallom S."/>
            <person name="Shukla M."/>
            <person name="Snyder E.E."/>
            <person name="Sobral B.W."/>
            <person name="Wattam A.R."/>
            <person name="Will R."/>
            <person name="Williams K."/>
            <person name="Yoo H."/>
            <person name="Bruce D."/>
            <person name="Detter C."/>
            <person name="Munk C."/>
            <person name="Brettin T.S."/>
        </authorList>
    </citation>
    <scope>NUCLEOTIDE SEQUENCE [LARGE SCALE GENOMIC DNA]</scope>
    <source>
        <strain>ATCC 23445 / NCTC 10510</strain>
    </source>
</reference>
<comment type="catalytic activity">
    <reaction evidence="1">
        <text>2-formamido-N(1)-(5-O-phospho-beta-D-ribosyl)acetamidine + ATP = 5-amino-1-(5-phospho-beta-D-ribosyl)imidazole + ADP + phosphate + H(+)</text>
        <dbReference type="Rhea" id="RHEA:23032"/>
        <dbReference type="ChEBI" id="CHEBI:15378"/>
        <dbReference type="ChEBI" id="CHEBI:30616"/>
        <dbReference type="ChEBI" id="CHEBI:43474"/>
        <dbReference type="ChEBI" id="CHEBI:137981"/>
        <dbReference type="ChEBI" id="CHEBI:147287"/>
        <dbReference type="ChEBI" id="CHEBI:456216"/>
        <dbReference type="EC" id="6.3.3.1"/>
    </reaction>
</comment>
<comment type="pathway">
    <text evidence="1">Purine metabolism; IMP biosynthesis via de novo pathway; 5-amino-1-(5-phospho-D-ribosyl)imidazole from N(2)-formyl-N(1)-(5-phospho-D-ribosyl)glycinamide: step 2/2.</text>
</comment>
<comment type="subcellular location">
    <subcellularLocation>
        <location evidence="1">Cytoplasm</location>
    </subcellularLocation>
</comment>
<comment type="similarity">
    <text evidence="1">Belongs to the AIR synthase family.</text>
</comment>